<evidence type="ECO:0000255" key="1">
    <source>
        <dbReference type="HAMAP-Rule" id="MF_02083"/>
    </source>
</evidence>
<evidence type="ECO:0000256" key="2">
    <source>
        <dbReference type="SAM" id="MobiDB-lite"/>
    </source>
</evidence>
<keyword id="KW-0028">Amino-acid biosynthesis</keyword>
<keyword id="KW-0055">Arginine biosynthesis</keyword>
<keyword id="KW-0963">Cytoplasm</keyword>
<keyword id="KW-0457">Lysine biosynthesis</keyword>
<keyword id="KW-0521">NADP</keyword>
<keyword id="KW-0560">Oxidoreductase</keyword>
<keyword id="KW-1185">Reference proteome</keyword>
<sequence>MTYTASVVGGSGFTGGELLRLLDGHPEFELAQATSRSKENKTIGHSHPNLRHSDLRFSSPEDLESVDVLFAATPHGVSMEQIDAFQEAAGTVVDLSADFRLESEAQYDEWYDGHTRPKLLEQSEYALPELNRDNLEGADLIASGGCNATATILGLLPLFEADILSGDEQIVVDVKVGSSEGGAGGGEASSHPERSGVVRPYAPTGHRHEAEIQQFLGIDVSFTVHAVDMIRGASATCHVFPEQRVSKGDLWGAYRGEYEDEPFVELVAGGGGVYRYPEPKSVAGTNRAEVGFELDPGNKRLVVFSAIDNMMKGSAGQAVHAANVALGIEETAGLEFQGLHPVGAP</sequence>
<gene>
    <name evidence="1" type="primary">lysY</name>
    <name type="synonym">argC</name>
    <name type="ordered locus">rrnAC2678</name>
</gene>
<comment type="function">
    <text evidence="1">Involved in both the arginine and lysine biosynthetic pathways.</text>
</comment>
<comment type="catalytic activity">
    <reaction evidence="1">
        <text>[amino-group carrier protein]-C-terminal-N-(1-carboxy-5-oxopentan-1-yl)-L-glutamine + phosphate + NADP(+) = [amino-group carrier protein]-C-terminal-N-(1-carboxy-5-phosphooxy-5-oxopentan-1-yl)-L-glutamine + NADPH + H(+)</text>
        <dbReference type="Rhea" id="RHEA:41948"/>
        <dbReference type="Rhea" id="RHEA-COMP:9712"/>
        <dbReference type="Rhea" id="RHEA-COMP:9714"/>
        <dbReference type="ChEBI" id="CHEBI:15378"/>
        <dbReference type="ChEBI" id="CHEBI:43474"/>
        <dbReference type="ChEBI" id="CHEBI:57783"/>
        <dbReference type="ChEBI" id="CHEBI:58349"/>
        <dbReference type="ChEBI" id="CHEBI:78499"/>
        <dbReference type="ChEBI" id="CHEBI:78501"/>
        <dbReference type="EC" id="1.2.1.103"/>
    </reaction>
</comment>
<comment type="catalytic activity">
    <reaction evidence="1">
        <text>[amino-group carrier protein]-C-terminal-gamma-(L-glutamyl-5-semialdehyde)-L-glutamate + phosphate + NADP(+) = [amino-group carrier protein]-C-terminal-gamma-(5-phospho-L-glutamyl)-L-glutamate + NADPH + H(+)</text>
        <dbReference type="Rhea" id="RHEA:52668"/>
        <dbReference type="Rhea" id="RHEA-COMP:13313"/>
        <dbReference type="Rhea" id="RHEA-COMP:13327"/>
        <dbReference type="ChEBI" id="CHEBI:15378"/>
        <dbReference type="ChEBI" id="CHEBI:43474"/>
        <dbReference type="ChEBI" id="CHEBI:57783"/>
        <dbReference type="ChEBI" id="CHEBI:58349"/>
        <dbReference type="ChEBI" id="CHEBI:136717"/>
        <dbReference type="ChEBI" id="CHEBI:136761"/>
        <dbReference type="EC" id="1.2.1.106"/>
    </reaction>
</comment>
<comment type="pathway">
    <text evidence="1">Amino-acid biosynthesis; L-lysine biosynthesis via AAA pathway; L-lysine from L-alpha-aminoadipate (Thermus route): step 3/5.</text>
</comment>
<comment type="pathway">
    <text evidence="1">Amino-acid biosynthesis; L-arginine biosynthesis.</text>
</comment>
<comment type="subcellular location">
    <subcellularLocation>
        <location evidence="1">Cytoplasm</location>
    </subcellularLocation>
</comment>
<comment type="similarity">
    <text evidence="1">Belongs to the NAGSA dehydrogenase family. Type 1 subfamily. LysY sub-subfamily.</text>
</comment>
<dbReference type="EC" id="1.2.1.103" evidence="1"/>
<dbReference type="EC" id="1.2.1.106" evidence="1"/>
<dbReference type="EMBL" id="AY596297">
    <property type="protein sequence ID" value="AAV47453.1"/>
    <property type="molecule type" value="Genomic_DNA"/>
</dbReference>
<dbReference type="RefSeq" id="WP_011224368.1">
    <property type="nucleotide sequence ID" value="NC_006396.1"/>
</dbReference>
<dbReference type="SMR" id="Q5UZ50"/>
<dbReference type="STRING" id="272569.rrnAC2678"/>
<dbReference type="PaxDb" id="272569-rrnAC2678"/>
<dbReference type="EnsemblBacteria" id="AAV47453">
    <property type="protein sequence ID" value="AAV47453"/>
    <property type="gene ID" value="rrnAC2678"/>
</dbReference>
<dbReference type="GeneID" id="40153549"/>
<dbReference type="KEGG" id="hma:rrnAC2678"/>
<dbReference type="PATRIC" id="fig|272569.17.peg.3268"/>
<dbReference type="eggNOG" id="arCOG00495">
    <property type="taxonomic scope" value="Archaea"/>
</dbReference>
<dbReference type="HOGENOM" id="CLU_006384_0_1_2"/>
<dbReference type="UniPathway" id="UPA00033">
    <property type="reaction ID" value="UER00037"/>
</dbReference>
<dbReference type="UniPathway" id="UPA00068"/>
<dbReference type="Proteomes" id="UP000001169">
    <property type="component" value="Chromosome I"/>
</dbReference>
<dbReference type="GO" id="GO:0005737">
    <property type="term" value="C:cytoplasm"/>
    <property type="evidence" value="ECO:0007669"/>
    <property type="project" value="UniProtKB-SubCell"/>
</dbReference>
<dbReference type="GO" id="GO:0043870">
    <property type="term" value="F:N-acetyl-gamma-aminoadipyl-phosphate reductase activity"/>
    <property type="evidence" value="ECO:0007669"/>
    <property type="project" value="RHEA"/>
</dbReference>
<dbReference type="GO" id="GO:0003942">
    <property type="term" value="F:N-acetyl-gamma-glutamyl-phosphate reductase activity"/>
    <property type="evidence" value="ECO:0007669"/>
    <property type="project" value="InterPro"/>
</dbReference>
<dbReference type="GO" id="GO:0051287">
    <property type="term" value="F:NAD binding"/>
    <property type="evidence" value="ECO:0007669"/>
    <property type="project" value="InterPro"/>
</dbReference>
<dbReference type="GO" id="GO:0070401">
    <property type="term" value="F:NADP+ binding"/>
    <property type="evidence" value="ECO:0007669"/>
    <property type="project" value="InterPro"/>
</dbReference>
<dbReference type="GO" id="GO:0042450">
    <property type="term" value="P:arginine biosynthetic process via ornithine"/>
    <property type="evidence" value="ECO:0007669"/>
    <property type="project" value="UniProtKB-UniRule"/>
</dbReference>
<dbReference type="GO" id="GO:0006526">
    <property type="term" value="P:L-arginine biosynthetic process"/>
    <property type="evidence" value="ECO:0007669"/>
    <property type="project" value="UniProtKB-UniPathway"/>
</dbReference>
<dbReference type="GO" id="GO:0019878">
    <property type="term" value="P:lysine biosynthetic process via aminoadipic acid"/>
    <property type="evidence" value="ECO:0007669"/>
    <property type="project" value="UniProtKB-UniRule"/>
</dbReference>
<dbReference type="CDD" id="cd23939">
    <property type="entry name" value="AGPR_1_C_LysY"/>
    <property type="match status" value="1"/>
</dbReference>
<dbReference type="CDD" id="cd24151">
    <property type="entry name" value="AGPR_1_N_LysY"/>
    <property type="match status" value="1"/>
</dbReference>
<dbReference type="Gene3D" id="3.30.360.10">
    <property type="entry name" value="Dihydrodipicolinate Reductase, domain 2"/>
    <property type="match status" value="1"/>
</dbReference>
<dbReference type="Gene3D" id="3.40.50.720">
    <property type="entry name" value="NAD(P)-binding Rossmann-like Domain"/>
    <property type="match status" value="1"/>
</dbReference>
<dbReference type="HAMAP" id="MF_00150">
    <property type="entry name" value="ArgC_type1"/>
    <property type="match status" value="1"/>
</dbReference>
<dbReference type="HAMAP" id="MF_02083">
    <property type="entry name" value="LysY"/>
    <property type="match status" value="1"/>
</dbReference>
<dbReference type="InterPro" id="IPR000706">
    <property type="entry name" value="AGPR_type-1"/>
</dbReference>
<dbReference type="InterPro" id="IPR037535">
    <property type="entry name" value="LysY"/>
</dbReference>
<dbReference type="InterPro" id="IPR036291">
    <property type="entry name" value="NAD(P)-bd_dom_sf"/>
</dbReference>
<dbReference type="InterPro" id="IPR050085">
    <property type="entry name" value="NAGSA_dehydrogenase"/>
</dbReference>
<dbReference type="InterPro" id="IPR000534">
    <property type="entry name" value="Semialdehyde_DH_NAD-bd"/>
</dbReference>
<dbReference type="NCBIfam" id="TIGR01850">
    <property type="entry name" value="argC"/>
    <property type="match status" value="1"/>
</dbReference>
<dbReference type="PANTHER" id="PTHR32338:SF11">
    <property type="entry name" value="[LYSW]-L-2-AMINOADIPATE_[LYSW]-L-GLUTAMATE PHOSPHATE REDUCTASE-RELATED"/>
    <property type="match status" value="1"/>
</dbReference>
<dbReference type="PANTHER" id="PTHR32338">
    <property type="entry name" value="N-ACETYL-GAMMA-GLUTAMYL-PHOSPHATE REDUCTASE, CHLOROPLASTIC-RELATED-RELATED"/>
    <property type="match status" value="1"/>
</dbReference>
<dbReference type="Pfam" id="PF01118">
    <property type="entry name" value="Semialdhyde_dh"/>
    <property type="match status" value="1"/>
</dbReference>
<dbReference type="Pfam" id="PF22698">
    <property type="entry name" value="Semialdhyde_dhC_1"/>
    <property type="match status" value="1"/>
</dbReference>
<dbReference type="SMART" id="SM00859">
    <property type="entry name" value="Semialdhyde_dh"/>
    <property type="match status" value="1"/>
</dbReference>
<dbReference type="SUPFAM" id="SSF55347">
    <property type="entry name" value="Glyceraldehyde-3-phosphate dehydrogenase-like, C-terminal domain"/>
    <property type="match status" value="1"/>
</dbReference>
<dbReference type="SUPFAM" id="SSF51735">
    <property type="entry name" value="NAD(P)-binding Rossmann-fold domains"/>
    <property type="match status" value="1"/>
</dbReference>
<name>LYSY_HALMA</name>
<feature type="chain" id="PRO_0000112484" description="Putative [LysW]-L-2-aminoadipate/[LysW]-L-glutamate phosphate reductase">
    <location>
        <begin position="1"/>
        <end position="345"/>
    </location>
</feature>
<feature type="region of interest" description="Disordered" evidence="2">
    <location>
        <begin position="34"/>
        <end position="56"/>
    </location>
</feature>
<feature type="active site" evidence="1">
    <location>
        <position position="146"/>
    </location>
</feature>
<feature type="binding site" evidence="1">
    <location>
        <begin position="11"/>
        <end position="14"/>
    </location>
    <ligand>
        <name>NADP(+)</name>
        <dbReference type="ChEBI" id="CHEBI:58349"/>
    </ligand>
</feature>
<feature type="binding site" evidence="1">
    <location>
        <position position="309"/>
    </location>
    <ligand>
        <name>NADP(+)</name>
        <dbReference type="ChEBI" id="CHEBI:58349"/>
    </ligand>
</feature>
<proteinExistence type="inferred from homology"/>
<reference key="1">
    <citation type="journal article" date="2004" name="Genome Res.">
        <title>Genome sequence of Haloarcula marismortui: a halophilic archaeon from the Dead Sea.</title>
        <authorList>
            <person name="Baliga N.S."/>
            <person name="Bonneau R."/>
            <person name="Facciotti M.T."/>
            <person name="Pan M."/>
            <person name="Glusman G."/>
            <person name="Deutsch E.W."/>
            <person name="Shannon P."/>
            <person name="Chiu Y."/>
            <person name="Weng R.S."/>
            <person name="Gan R.R."/>
            <person name="Hung P."/>
            <person name="Date S.V."/>
            <person name="Marcotte E."/>
            <person name="Hood L."/>
            <person name="Ng W.V."/>
        </authorList>
    </citation>
    <scope>NUCLEOTIDE SEQUENCE [LARGE SCALE GENOMIC DNA]</scope>
    <source>
        <strain>ATCC 43049 / DSM 3752 / JCM 8966 / VKM B-1809</strain>
    </source>
</reference>
<accession>Q5UZ50</accession>
<organism>
    <name type="scientific">Haloarcula marismortui (strain ATCC 43049 / DSM 3752 / JCM 8966 / VKM B-1809)</name>
    <name type="common">Halobacterium marismortui</name>
    <dbReference type="NCBI Taxonomy" id="272569"/>
    <lineage>
        <taxon>Archaea</taxon>
        <taxon>Methanobacteriati</taxon>
        <taxon>Methanobacteriota</taxon>
        <taxon>Stenosarchaea group</taxon>
        <taxon>Halobacteria</taxon>
        <taxon>Halobacteriales</taxon>
        <taxon>Haloarculaceae</taxon>
        <taxon>Haloarcula</taxon>
    </lineage>
</organism>
<protein>
    <recommendedName>
        <fullName evidence="1">Putative [LysW]-L-2-aminoadipate/[LysW]-L-glutamate phosphate reductase</fullName>
        <ecNumber evidence="1">1.2.1.103</ecNumber>
        <ecNumber evidence="1">1.2.1.106</ecNumber>
    </recommendedName>
</protein>